<dbReference type="EMBL" id="AY261360">
    <property type="status" value="NOT_ANNOTATED_CDS"/>
    <property type="molecule type" value="Genomic_DNA"/>
</dbReference>
<dbReference type="SMR" id="P0C9M1"/>
<dbReference type="Proteomes" id="UP000000861">
    <property type="component" value="Segment"/>
</dbReference>
<dbReference type="GO" id="GO:0042330">
    <property type="term" value="P:taxis"/>
    <property type="evidence" value="ECO:0007669"/>
    <property type="project" value="InterPro"/>
</dbReference>
<dbReference type="InterPro" id="IPR002595">
    <property type="entry name" value="ASFV_MGF360"/>
</dbReference>
<dbReference type="Pfam" id="PF01671">
    <property type="entry name" value="ASFV_360"/>
    <property type="match status" value="1"/>
</dbReference>
<sequence>MLPSTLQALTKKVLATQLISEDDYYTLKCCGLWWHEAPLMLCYDKNHQMLVKTPILKEGLLLNTALMKAVQENNYELIMLFTEWGANINYGLLSVNMEHTRNLCRKLGAKEGLEASEILQFFFKTKRHKTSSNIILCHELFSNNLLLQNVDMEELKMIIYWDLKDLTDNIILDDNTSLSEMLTKYWYGIAVRYKLKEAIQYFYQEYEQLNEWRLNCALSFNNVFDLHEIHNTGKVYMDIDEMMRLACIRDNNFLTIYYCFALGADINQAMFTSILNYNVFNMFFCMDLGANAIEESKALAEQKNYHLIVNMLSFKNYSPDPFLISKIIDPKKINTMLKSYYSKNMSTFDYMCIGYF</sequence>
<organismHost>
    <name type="scientific">Ornithodoros</name>
    <name type="common">relapsing fever ticks</name>
    <dbReference type="NCBI Taxonomy" id="6937"/>
</organismHost>
<organismHost>
    <name type="scientific">Phacochoerus aethiopicus</name>
    <name type="common">Warthog</name>
    <dbReference type="NCBI Taxonomy" id="85517"/>
</organismHost>
<organismHost>
    <name type="scientific">Phacochoerus africanus</name>
    <name type="common">Warthog</name>
    <dbReference type="NCBI Taxonomy" id="41426"/>
</organismHost>
<organismHost>
    <name type="scientific">Potamochoerus larvatus</name>
    <name type="common">Bushpig</name>
    <dbReference type="NCBI Taxonomy" id="273792"/>
</organismHost>
<organismHost>
    <name type="scientific">Sus scrofa</name>
    <name type="common">Pig</name>
    <dbReference type="NCBI Taxonomy" id="9823"/>
</organismHost>
<proteinExistence type="inferred from homology"/>
<accession>P0C9M1</accession>
<comment type="function">
    <text evidence="1">Plays a role in virus cell tropism, and may be required for efficient virus replication in macrophages.</text>
</comment>
<comment type="similarity">
    <text evidence="2">Belongs to the asfivirus MGF 360 family.</text>
</comment>
<organism>
    <name type="scientific">African swine fever virus (isolate Pig/Kenya/KEN-50/1950)</name>
    <name type="common">ASFV</name>
    <dbReference type="NCBI Taxonomy" id="561445"/>
    <lineage>
        <taxon>Viruses</taxon>
        <taxon>Varidnaviria</taxon>
        <taxon>Bamfordvirae</taxon>
        <taxon>Nucleocytoviricota</taxon>
        <taxon>Pokkesviricetes</taxon>
        <taxon>Asfuvirales</taxon>
        <taxon>Asfarviridae</taxon>
        <taxon>Asfivirus</taxon>
        <taxon>African swine fever virus</taxon>
    </lineage>
</organism>
<reference key="1">
    <citation type="submission" date="2003-03" db="EMBL/GenBank/DDBJ databases">
        <title>African swine fever virus genomes.</title>
        <authorList>
            <person name="Kutish G.F."/>
            <person name="Rock D.L."/>
        </authorList>
    </citation>
    <scope>NUCLEOTIDE SEQUENCE [LARGE SCALE GENOMIC DNA]</scope>
</reference>
<name>3602L_ASFK5</name>
<gene>
    <name type="ordered locus">Ken-001</name>
</gene>
<protein>
    <recommendedName>
        <fullName>Protein MGF 360-2L</fullName>
    </recommendedName>
</protein>
<feature type="chain" id="PRO_0000373247" description="Protein MGF 360-2L">
    <location>
        <begin position="1"/>
        <end position="356"/>
    </location>
</feature>
<evidence type="ECO:0000250" key="1"/>
<evidence type="ECO:0000305" key="2"/>